<reference key="1">
    <citation type="journal article" date="2005" name="Proc. Natl. Acad. Sci. U.S.A.">
        <title>The psychrophilic lifestyle as revealed by the genome sequence of Colwellia psychrerythraea 34H through genomic and proteomic analyses.</title>
        <authorList>
            <person name="Methe B.A."/>
            <person name="Nelson K.E."/>
            <person name="Deming J.W."/>
            <person name="Momen B."/>
            <person name="Melamud E."/>
            <person name="Zhang X."/>
            <person name="Moult J."/>
            <person name="Madupu R."/>
            <person name="Nelson W.C."/>
            <person name="Dodson R.J."/>
            <person name="Brinkac L.M."/>
            <person name="Daugherty S.C."/>
            <person name="Durkin A.S."/>
            <person name="DeBoy R.T."/>
            <person name="Kolonay J.F."/>
            <person name="Sullivan S.A."/>
            <person name="Zhou L."/>
            <person name="Davidsen T.M."/>
            <person name="Wu M."/>
            <person name="Huston A.L."/>
            <person name="Lewis M."/>
            <person name="Weaver B."/>
            <person name="Weidman J.F."/>
            <person name="Khouri H."/>
            <person name="Utterback T.R."/>
            <person name="Feldblyum T.V."/>
            <person name="Fraser C.M."/>
        </authorList>
    </citation>
    <scope>NUCLEOTIDE SEQUENCE [LARGE SCALE GENOMIC DNA]</scope>
    <source>
        <strain>34H / ATCC BAA-681</strain>
    </source>
</reference>
<feature type="chain" id="PRO_1000007463" description="Large ribosomal subunit protein uL29">
    <location>
        <begin position="1"/>
        <end position="63"/>
    </location>
</feature>
<gene>
    <name evidence="1" type="primary">rpmC</name>
    <name type="ordered locus">CPS_0865</name>
</gene>
<name>RL29_COLP3</name>
<keyword id="KW-0687">Ribonucleoprotein</keyword>
<keyword id="KW-0689">Ribosomal protein</keyword>
<organism>
    <name type="scientific">Colwellia psychrerythraea (strain 34H / ATCC BAA-681)</name>
    <name type="common">Vibrio psychroerythus</name>
    <dbReference type="NCBI Taxonomy" id="167879"/>
    <lineage>
        <taxon>Bacteria</taxon>
        <taxon>Pseudomonadati</taxon>
        <taxon>Pseudomonadota</taxon>
        <taxon>Gammaproteobacteria</taxon>
        <taxon>Alteromonadales</taxon>
        <taxon>Colwelliaceae</taxon>
        <taxon>Colwellia</taxon>
    </lineage>
</organism>
<protein>
    <recommendedName>
        <fullName evidence="1">Large ribosomal subunit protein uL29</fullName>
    </recommendedName>
    <alternativeName>
        <fullName evidence="2">50S ribosomal protein L29</fullName>
    </alternativeName>
</protein>
<comment type="similarity">
    <text evidence="1">Belongs to the universal ribosomal protein uL29 family.</text>
</comment>
<sequence>MKVSELKAKSIEELNAELLELLREQFNYRMQASTGQLAQTHLLRIVRRNIARVKTIITEKAGK</sequence>
<dbReference type="EMBL" id="CP000083">
    <property type="protein sequence ID" value="AAZ24564.1"/>
    <property type="molecule type" value="Genomic_DNA"/>
</dbReference>
<dbReference type="RefSeq" id="WP_011041714.1">
    <property type="nucleotide sequence ID" value="NC_003910.7"/>
</dbReference>
<dbReference type="SMR" id="Q488A1"/>
<dbReference type="STRING" id="167879.CPS_0865"/>
<dbReference type="KEGG" id="cps:CPS_0865"/>
<dbReference type="eggNOG" id="COG0255">
    <property type="taxonomic scope" value="Bacteria"/>
</dbReference>
<dbReference type="HOGENOM" id="CLU_158491_1_2_6"/>
<dbReference type="Proteomes" id="UP000000547">
    <property type="component" value="Chromosome"/>
</dbReference>
<dbReference type="GO" id="GO:0022625">
    <property type="term" value="C:cytosolic large ribosomal subunit"/>
    <property type="evidence" value="ECO:0007669"/>
    <property type="project" value="TreeGrafter"/>
</dbReference>
<dbReference type="GO" id="GO:0003735">
    <property type="term" value="F:structural constituent of ribosome"/>
    <property type="evidence" value="ECO:0007669"/>
    <property type="project" value="InterPro"/>
</dbReference>
<dbReference type="GO" id="GO:0006412">
    <property type="term" value="P:translation"/>
    <property type="evidence" value="ECO:0007669"/>
    <property type="project" value="UniProtKB-UniRule"/>
</dbReference>
<dbReference type="CDD" id="cd00427">
    <property type="entry name" value="Ribosomal_L29_HIP"/>
    <property type="match status" value="1"/>
</dbReference>
<dbReference type="FunFam" id="1.10.287.310:FF:000001">
    <property type="entry name" value="50S ribosomal protein L29"/>
    <property type="match status" value="1"/>
</dbReference>
<dbReference type="Gene3D" id="1.10.287.310">
    <property type="match status" value="1"/>
</dbReference>
<dbReference type="HAMAP" id="MF_00374">
    <property type="entry name" value="Ribosomal_uL29"/>
    <property type="match status" value="1"/>
</dbReference>
<dbReference type="InterPro" id="IPR050063">
    <property type="entry name" value="Ribosomal_protein_uL29"/>
</dbReference>
<dbReference type="InterPro" id="IPR001854">
    <property type="entry name" value="Ribosomal_uL29"/>
</dbReference>
<dbReference type="InterPro" id="IPR018254">
    <property type="entry name" value="Ribosomal_uL29_CS"/>
</dbReference>
<dbReference type="InterPro" id="IPR036049">
    <property type="entry name" value="Ribosomal_uL29_sf"/>
</dbReference>
<dbReference type="NCBIfam" id="TIGR00012">
    <property type="entry name" value="L29"/>
    <property type="match status" value="1"/>
</dbReference>
<dbReference type="PANTHER" id="PTHR10916">
    <property type="entry name" value="60S RIBOSOMAL PROTEIN L35/50S RIBOSOMAL PROTEIN L29"/>
    <property type="match status" value="1"/>
</dbReference>
<dbReference type="PANTHER" id="PTHR10916:SF0">
    <property type="entry name" value="LARGE RIBOSOMAL SUBUNIT PROTEIN UL29C"/>
    <property type="match status" value="1"/>
</dbReference>
<dbReference type="Pfam" id="PF00831">
    <property type="entry name" value="Ribosomal_L29"/>
    <property type="match status" value="1"/>
</dbReference>
<dbReference type="SUPFAM" id="SSF46561">
    <property type="entry name" value="Ribosomal protein L29 (L29p)"/>
    <property type="match status" value="1"/>
</dbReference>
<dbReference type="PROSITE" id="PS00579">
    <property type="entry name" value="RIBOSOMAL_L29"/>
    <property type="match status" value="1"/>
</dbReference>
<accession>Q488A1</accession>
<proteinExistence type="inferred from homology"/>
<evidence type="ECO:0000255" key="1">
    <source>
        <dbReference type="HAMAP-Rule" id="MF_00374"/>
    </source>
</evidence>
<evidence type="ECO:0000305" key="2"/>